<organism>
    <name type="scientific">Mus musculus</name>
    <name type="common">Mouse</name>
    <dbReference type="NCBI Taxonomy" id="10090"/>
    <lineage>
        <taxon>Eukaryota</taxon>
        <taxon>Metazoa</taxon>
        <taxon>Chordata</taxon>
        <taxon>Craniata</taxon>
        <taxon>Vertebrata</taxon>
        <taxon>Euteleostomi</taxon>
        <taxon>Mammalia</taxon>
        <taxon>Eutheria</taxon>
        <taxon>Euarchontoglires</taxon>
        <taxon>Glires</taxon>
        <taxon>Rodentia</taxon>
        <taxon>Myomorpha</taxon>
        <taxon>Muroidea</taxon>
        <taxon>Muridae</taxon>
        <taxon>Murinae</taxon>
        <taxon>Mus</taxon>
        <taxon>Mus</taxon>
    </lineage>
</organism>
<protein>
    <recommendedName>
        <fullName evidence="6">Brain mitochondrial carrier protein 1</fullName>
        <shortName>BMCP-1</shortName>
    </recommendedName>
    <alternativeName>
        <fullName evidence="5">Mitochondrial uncoupling protein 5</fullName>
        <shortName>UCP 5</shortName>
    </alternativeName>
    <alternativeName>
        <fullName>Solute carrier family 25 member 14</fullName>
    </alternativeName>
</protein>
<evidence type="ECO:0000250" key="1">
    <source>
        <dbReference type="UniProtKB" id="O95258"/>
    </source>
</evidence>
<evidence type="ECO:0000255" key="2"/>
<evidence type="ECO:0000269" key="3">
    <source>
    </source>
</evidence>
<evidence type="ECO:0000269" key="4">
    <source>
    </source>
</evidence>
<evidence type="ECO:0000303" key="5">
    <source>
    </source>
</evidence>
<evidence type="ECO:0000303" key="6">
    <source>
    </source>
</evidence>
<evidence type="ECO:0000305" key="7"/>
<evidence type="ECO:0000305" key="8">
    <source>
    </source>
</evidence>
<evidence type="ECO:0000312" key="9">
    <source>
        <dbReference type="MGI" id="MGI:1330823"/>
    </source>
</evidence>
<dbReference type="EMBL" id="AF076981">
    <property type="protein sequence ID" value="AAD03674.1"/>
    <property type="molecule type" value="mRNA"/>
</dbReference>
<dbReference type="EMBL" id="AF155812">
    <property type="protein sequence ID" value="AAG29585.1"/>
    <property type="molecule type" value="mRNA"/>
</dbReference>
<dbReference type="EMBL" id="AF155813">
    <property type="protein sequence ID" value="AAG29586.1"/>
    <property type="molecule type" value="mRNA"/>
</dbReference>
<dbReference type="EMBL" id="AL669901">
    <property type="status" value="NOT_ANNOTATED_CDS"/>
    <property type="molecule type" value="Genomic_DNA"/>
</dbReference>
<dbReference type="EMBL" id="AL672042">
    <property type="status" value="NOT_ANNOTATED_CDS"/>
    <property type="molecule type" value="Genomic_DNA"/>
</dbReference>
<dbReference type="EMBL" id="BC048692">
    <property type="protein sequence ID" value="AAH48692.1"/>
    <property type="molecule type" value="mRNA"/>
</dbReference>
<dbReference type="CCDS" id="CCDS30112.1">
    <molecule id="Q9Z2B2-2"/>
</dbReference>
<dbReference type="CCDS" id="CCDS53066.1">
    <molecule id="Q9Z2B2-1"/>
</dbReference>
<dbReference type="RefSeq" id="NP_001159922.1">
    <molecule id="Q9Z2B2-1"/>
    <property type="nucleotide sequence ID" value="NM_001166450.4"/>
</dbReference>
<dbReference type="RefSeq" id="NP_001277634.1">
    <property type="nucleotide sequence ID" value="NM_001290705.1"/>
</dbReference>
<dbReference type="RefSeq" id="NP_001346065.1">
    <molecule id="Q9Z2B2-2"/>
    <property type="nucleotide sequence ID" value="NM_001359136.2"/>
</dbReference>
<dbReference type="RefSeq" id="NP_001390179.1">
    <molecule id="Q9Z2B2-1"/>
    <property type="nucleotide sequence ID" value="NM_001403250.1"/>
</dbReference>
<dbReference type="RefSeq" id="NP_035528.1">
    <molecule id="Q9Z2B2-2"/>
    <property type="nucleotide sequence ID" value="NM_011398.4"/>
</dbReference>
<dbReference type="RefSeq" id="XP_017173930.1">
    <property type="nucleotide sequence ID" value="XM_017318441.1"/>
</dbReference>
<dbReference type="SMR" id="Q9Z2B2"/>
<dbReference type="BioGRID" id="203302">
    <property type="interactions" value="1"/>
</dbReference>
<dbReference type="FunCoup" id="Q9Z2B2">
    <property type="interactions" value="2188"/>
</dbReference>
<dbReference type="STRING" id="10090.ENSMUSP00000110586"/>
<dbReference type="PhosphoSitePlus" id="Q9Z2B2"/>
<dbReference type="PaxDb" id="10090-ENSMUSP00000033431"/>
<dbReference type="ProteomicsDB" id="297864">
    <molecule id="Q9Z2B2-1"/>
</dbReference>
<dbReference type="ProteomicsDB" id="297865">
    <molecule id="Q9Z2B2-2"/>
</dbReference>
<dbReference type="Pumba" id="Q9Z2B2"/>
<dbReference type="Antibodypedia" id="16263">
    <property type="antibodies" value="90 antibodies from 26 providers"/>
</dbReference>
<dbReference type="DNASU" id="20523"/>
<dbReference type="Ensembl" id="ENSMUST00000033431.14">
    <molecule id="Q9Z2B2-2"/>
    <property type="protein sequence ID" value="ENSMUSP00000033431.8"/>
    <property type="gene ID" value="ENSMUSG00000031105.17"/>
</dbReference>
<dbReference type="Ensembl" id="ENSMUST00000114936.8">
    <molecule id="Q9Z2B2-1"/>
    <property type="protein sequence ID" value="ENSMUSP00000110586.2"/>
    <property type="gene ID" value="ENSMUSG00000031105.17"/>
</dbReference>
<dbReference type="Ensembl" id="ENSMUST00000177710.2">
    <molecule id="Q9Z2B2-1"/>
    <property type="protein sequence ID" value="ENSMUSP00000136140.2"/>
    <property type="gene ID" value="ENSMUSG00000031105.17"/>
</dbReference>
<dbReference type="GeneID" id="20523"/>
<dbReference type="KEGG" id="mmu:20523"/>
<dbReference type="UCSC" id="uc009tco.3">
    <molecule id="Q9Z2B2-2"/>
    <property type="organism name" value="mouse"/>
</dbReference>
<dbReference type="UCSC" id="uc009tcp.3">
    <molecule id="Q9Z2B2-1"/>
    <property type="organism name" value="mouse"/>
</dbReference>
<dbReference type="AGR" id="MGI:1330823"/>
<dbReference type="CTD" id="9016"/>
<dbReference type="MGI" id="MGI:1330823">
    <property type="gene designation" value="Slc25a14"/>
</dbReference>
<dbReference type="VEuPathDB" id="HostDB:ENSMUSG00000031105"/>
<dbReference type="eggNOG" id="KOG0753">
    <property type="taxonomic scope" value="Eukaryota"/>
</dbReference>
<dbReference type="GeneTree" id="ENSGT00940000159471"/>
<dbReference type="InParanoid" id="Q9Z2B2"/>
<dbReference type="OrthoDB" id="756301at2759"/>
<dbReference type="PhylomeDB" id="Q9Z2B2"/>
<dbReference type="TreeFam" id="TF323211"/>
<dbReference type="Reactome" id="R-MMU-167826">
    <property type="pathway name" value="The fatty acid cycling model"/>
</dbReference>
<dbReference type="BioGRID-ORCS" id="20523">
    <property type="hits" value="1 hit in 76 CRISPR screens"/>
</dbReference>
<dbReference type="PRO" id="PR:Q9Z2B2"/>
<dbReference type="Proteomes" id="UP000000589">
    <property type="component" value="Chromosome X"/>
</dbReference>
<dbReference type="RNAct" id="Q9Z2B2">
    <property type="molecule type" value="protein"/>
</dbReference>
<dbReference type="Bgee" id="ENSMUSG00000031105">
    <property type="expression patterns" value="Expressed in substantia nigra and 221 other cell types or tissues"/>
</dbReference>
<dbReference type="ExpressionAtlas" id="Q9Z2B2">
    <property type="expression patterns" value="baseline and differential"/>
</dbReference>
<dbReference type="GO" id="GO:0005740">
    <property type="term" value="C:mitochondrial envelope"/>
    <property type="evidence" value="ECO:0000314"/>
    <property type="project" value="MGI"/>
</dbReference>
<dbReference type="GO" id="GO:0005743">
    <property type="term" value="C:mitochondrial inner membrane"/>
    <property type="evidence" value="ECO:0007669"/>
    <property type="project" value="UniProtKB-SubCell"/>
</dbReference>
<dbReference type="GO" id="GO:0005739">
    <property type="term" value="C:mitochondrion"/>
    <property type="evidence" value="ECO:0000314"/>
    <property type="project" value="UniProtKB"/>
</dbReference>
<dbReference type="GO" id="GO:0015108">
    <property type="term" value="F:chloride transmembrane transporter activity"/>
    <property type="evidence" value="ECO:0000250"/>
    <property type="project" value="UniProtKB"/>
</dbReference>
<dbReference type="GO" id="GO:0015078">
    <property type="term" value="F:proton transmembrane transporter activity"/>
    <property type="evidence" value="ECO:0000250"/>
    <property type="project" value="UniProtKB"/>
</dbReference>
<dbReference type="GO" id="GO:0005452">
    <property type="term" value="F:solute:inorganic anion antiporter activity"/>
    <property type="evidence" value="ECO:0000250"/>
    <property type="project" value="UniProtKB"/>
</dbReference>
<dbReference type="GO" id="GO:0015698">
    <property type="term" value="P:inorganic anion transport"/>
    <property type="evidence" value="ECO:0000250"/>
    <property type="project" value="UniProtKB"/>
</dbReference>
<dbReference type="GO" id="GO:1900407">
    <property type="term" value="P:regulation of cellular response to oxidative stress"/>
    <property type="evidence" value="ECO:0000314"/>
    <property type="project" value="UniProtKB"/>
</dbReference>
<dbReference type="FunFam" id="1.50.40.10:FF:000006">
    <property type="entry name" value="brain mitochondrial carrier protein 1 isoform X1"/>
    <property type="match status" value="1"/>
</dbReference>
<dbReference type="Gene3D" id="1.50.40.10">
    <property type="entry name" value="Mitochondrial carrier domain"/>
    <property type="match status" value="1"/>
</dbReference>
<dbReference type="InterPro" id="IPR002067">
    <property type="entry name" value="Mit_carrier"/>
</dbReference>
<dbReference type="InterPro" id="IPR050391">
    <property type="entry name" value="Mito_Metabolite_Transporter"/>
</dbReference>
<dbReference type="InterPro" id="IPR018108">
    <property type="entry name" value="Mitochondrial_sb/sol_carrier"/>
</dbReference>
<dbReference type="InterPro" id="IPR023395">
    <property type="entry name" value="Mt_carrier_dom_sf"/>
</dbReference>
<dbReference type="PANTHER" id="PTHR45618">
    <property type="entry name" value="MITOCHONDRIAL DICARBOXYLATE CARRIER-RELATED"/>
    <property type="match status" value="1"/>
</dbReference>
<dbReference type="Pfam" id="PF00153">
    <property type="entry name" value="Mito_carr"/>
    <property type="match status" value="3"/>
</dbReference>
<dbReference type="PRINTS" id="PR00784">
    <property type="entry name" value="MTUNCOUPLING"/>
</dbReference>
<dbReference type="SUPFAM" id="SSF103506">
    <property type="entry name" value="Mitochondrial carrier"/>
    <property type="match status" value="1"/>
</dbReference>
<dbReference type="PROSITE" id="PS50920">
    <property type="entry name" value="SOLCAR"/>
    <property type="match status" value="3"/>
</dbReference>
<gene>
    <name evidence="9" type="primary">Slc25a14</name>
    <name evidence="6" type="synonym">Bmcp1</name>
    <name evidence="5" type="synonym">Ucp5</name>
</gene>
<accession>Q9Z2B2</accession>
<accession>Q9ESI8</accession>
<comment type="function">
    <text evidence="1 4">Transports inorganic anions (sulfate, sulfite, thiosulfate and phosphate) and, to a lesser extent, a variety of dicarboxylates (e.g. malonate, malate and citramalate) and, even more so, aspartate and glutamate and tricarboxylates. May catalyze the export of sulfite and thiosulfate (the hydrogen sulfide degradation products) from the mitochondria, thereby modulating the level of the hydrogen sulfide. Also can mediate a very low unidirectional transport of anions including sulfate, phosphate, (S)-malate, citrate, L-aspartate and L-glutamate. Maintains oxidative balance (through uncoupling activities) and ATP production (by modifying mitochondrial membrane potential). Is able to transport protons across lipid membranes. Also exhibits transmembrane chloride transport activity to a lesser extent (By similarity). May modify mitochondrial respiratory efficiency and mitochondrial oxidant production (PubMed:11701769).</text>
</comment>
<comment type="catalytic activity">
    <reaction evidence="1">
        <text>sulfite(in) + sulfate(out) = sulfite(out) + sulfate(in)</text>
        <dbReference type="Rhea" id="RHEA:73207"/>
        <dbReference type="ChEBI" id="CHEBI:16189"/>
        <dbReference type="ChEBI" id="CHEBI:17359"/>
    </reaction>
</comment>
<comment type="catalytic activity">
    <reaction evidence="1">
        <text>thiosulfate(in) + sulfate(out) = thiosulfate(out) + sulfate(in)</text>
        <dbReference type="Rhea" id="RHEA:73215"/>
        <dbReference type="ChEBI" id="CHEBI:16189"/>
        <dbReference type="ChEBI" id="CHEBI:33542"/>
    </reaction>
</comment>
<comment type="catalytic activity">
    <reaction evidence="1">
        <text>sulfate(out) + phosphate(in) = sulfate(in) + phosphate(out)</text>
        <dbReference type="Rhea" id="RHEA:71631"/>
        <dbReference type="ChEBI" id="CHEBI:16189"/>
        <dbReference type="ChEBI" id="CHEBI:43474"/>
    </reaction>
</comment>
<comment type="catalytic activity">
    <reaction evidence="1">
        <text>oxalate(in) + sulfate(out) = oxalate(out) + sulfate(in)</text>
        <dbReference type="Rhea" id="RHEA:72275"/>
        <dbReference type="ChEBI" id="CHEBI:16189"/>
        <dbReference type="ChEBI" id="CHEBI:30623"/>
    </reaction>
</comment>
<comment type="catalytic activity">
    <reaction evidence="1">
        <text>malonate(in) + sulfate(out) = malonate(out) + sulfate(in)</text>
        <dbReference type="Rhea" id="RHEA:73195"/>
        <dbReference type="ChEBI" id="CHEBI:15792"/>
        <dbReference type="ChEBI" id="CHEBI:16189"/>
    </reaction>
</comment>
<comment type="catalytic activity">
    <reaction evidence="1">
        <text>maleate(in) + sulfate(out) = maleate(out) + sulfate(in)</text>
        <dbReference type="Rhea" id="RHEA:73199"/>
        <dbReference type="ChEBI" id="CHEBI:16189"/>
        <dbReference type="ChEBI" id="CHEBI:30780"/>
    </reaction>
</comment>
<comment type="catalytic activity">
    <reaction evidence="1">
        <text>(S)-malate(in) + sulfate(out) = (S)-malate(out) + sulfate(in)</text>
        <dbReference type="Rhea" id="RHEA:71615"/>
        <dbReference type="ChEBI" id="CHEBI:15589"/>
        <dbReference type="ChEBI" id="CHEBI:16189"/>
    </reaction>
</comment>
<comment type="catalytic activity">
    <reaction evidence="1">
        <text>(3S)-citramalate(in) + sulfate(out) = (3S)-citramalate(out) + sulfate(in)</text>
        <dbReference type="Rhea" id="RHEA:73223"/>
        <dbReference type="ChEBI" id="CHEBI:16189"/>
        <dbReference type="ChEBI" id="CHEBI:30936"/>
    </reaction>
</comment>
<comment type="catalytic activity">
    <reaction evidence="1">
        <text>(3R)-citramalate(in) + sulfate(out) = (3R)-citramalate(out) + sulfate(in)</text>
        <dbReference type="Rhea" id="RHEA:73227"/>
        <dbReference type="ChEBI" id="CHEBI:16189"/>
        <dbReference type="ChEBI" id="CHEBI:30934"/>
    </reaction>
</comment>
<comment type="catalytic activity">
    <reaction evidence="1">
        <text>sulfate(out) + succinate(in) = sulfate(in) + succinate(out)</text>
        <dbReference type="Rhea" id="RHEA:73411"/>
        <dbReference type="ChEBI" id="CHEBI:16189"/>
        <dbReference type="ChEBI" id="CHEBI:30031"/>
    </reaction>
</comment>
<comment type="catalytic activity">
    <reaction evidence="1">
        <text>(S,S)-tartrate(in) + sulfate(out) = (S,S)-tartrate(out) + sulfate(in)</text>
        <dbReference type="Rhea" id="RHEA:73407"/>
        <dbReference type="ChEBI" id="CHEBI:16189"/>
        <dbReference type="ChEBI" id="CHEBI:30927"/>
    </reaction>
</comment>
<comment type="catalytic activity">
    <reaction evidence="1">
        <text>(2R,3R)-tartrate(in) + sulfate(out) = (2R,3R)-tartrate(out) + sulfate(in)</text>
        <dbReference type="Rhea" id="RHEA:73403"/>
        <dbReference type="ChEBI" id="CHEBI:16189"/>
        <dbReference type="ChEBI" id="CHEBI:30924"/>
    </reaction>
</comment>
<comment type="catalytic activity">
    <reaction evidence="1">
        <text>D-aspartate(in) + sulfate(out) = D-aspartate(out) + sulfate(in)</text>
        <dbReference type="Rhea" id="RHEA:73399"/>
        <dbReference type="ChEBI" id="CHEBI:16189"/>
        <dbReference type="ChEBI" id="CHEBI:29990"/>
    </reaction>
</comment>
<comment type="catalytic activity">
    <reaction evidence="1">
        <text>L-aspartate(in) + sulfate(out) = L-aspartate(out) + sulfate(in)</text>
        <dbReference type="Rhea" id="RHEA:73395"/>
        <dbReference type="ChEBI" id="CHEBI:16189"/>
        <dbReference type="ChEBI" id="CHEBI:29991"/>
    </reaction>
</comment>
<comment type="catalytic activity">
    <reaction evidence="1">
        <text>sulfate(in) = sulfate(out)</text>
        <dbReference type="Rhea" id="RHEA:34983"/>
        <dbReference type="ChEBI" id="CHEBI:16189"/>
    </reaction>
</comment>
<comment type="catalytic activity">
    <reaction evidence="1">
        <text>phosphate(in) = phosphate(out)</text>
        <dbReference type="Rhea" id="RHEA:32823"/>
        <dbReference type="ChEBI" id="CHEBI:43474"/>
    </reaction>
</comment>
<comment type="catalytic activity">
    <reaction evidence="1">
        <text>(S)-malate(out) = (S)-malate(in)</text>
        <dbReference type="Rhea" id="RHEA:74555"/>
        <dbReference type="ChEBI" id="CHEBI:15589"/>
    </reaction>
</comment>
<comment type="catalytic activity">
    <reaction evidence="1">
        <text>citrate(in) = citrate(out)</text>
        <dbReference type="Rhea" id="RHEA:33183"/>
        <dbReference type="ChEBI" id="CHEBI:16947"/>
    </reaction>
</comment>
<comment type="catalytic activity">
    <reaction evidence="1">
        <text>L-aspartate(out) = L-aspartate(in)</text>
        <dbReference type="Rhea" id="RHEA:66332"/>
        <dbReference type="ChEBI" id="CHEBI:29991"/>
    </reaction>
</comment>
<comment type="catalytic activity">
    <reaction evidence="1">
        <text>L-glutamate(out) = L-glutamate(in)</text>
        <dbReference type="Rhea" id="RHEA:66336"/>
        <dbReference type="ChEBI" id="CHEBI:29985"/>
    </reaction>
</comment>
<comment type="catalytic activity">
    <reaction evidence="1">
        <text>H(+)(in) = H(+)(out)</text>
        <dbReference type="Rhea" id="RHEA:34979"/>
        <dbReference type="ChEBI" id="CHEBI:15378"/>
    </reaction>
</comment>
<comment type="catalytic activity">
    <reaction evidence="1">
        <text>chloride(in) = chloride(out)</text>
        <dbReference type="Rhea" id="RHEA:29823"/>
        <dbReference type="ChEBI" id="CHEBI:17996"/>
    </reaction>
</comment>
<comment type="subunit">
    <text evidence="1">Homotetramer.</text>
</comment>
<comment type="subcellular location">
    <subcellularLocation>
        <location evidence="8">Mitochondrion inner membrane</location>
        <topology evidence="2">Multi-pass membrane protein</topology>
    </subcellularLocation>
</comment>
<comment type="alternative products">
    <event type="alternative splicing"/>
    <isoform>
        <id>Q9Z2B2-1</id>
        <name>1</name>
        <name>UCP5L</name>
        <sequence type="displayed"/>
    </isoform>
    <isoform>
        <id>Q9Z2B2-2</id>
        <name>2</name>
        <name>UCP5S</name>
        <sequence type="described" ref="VSP_003274"/>
    </isoform>
</comment>
<comment type="tissue specificity">
    <text evidence="3 4">Mainly expressed in brain, particularly abundant in cortex, hippocampus thalamus, amygdala and hypothalamus (PubMed:10928996). Highly expressed in heart and kidney, but not liver or lung (at protein level) (PubMed:11701769). In the nervous system, expressed in cortex, basal ganglia, substantia nigra, cerebellum, and spinal cord (at protein level) (PubMed:11701769).</text>
</comment>
<comment type="similarity">
    <text evidence="7">Belongs to the mitochondrial carrier (TC 2.A.29) family.</text>
</comment>
<name>UCP5_MOUSE</name>
<reference key="1">
    <citation type="journal article" date="1998" name="J. Biol. Chem.">
        <title>BMCP1, a novel mitochondrial carrier with high expression in the central nervous system of humans and rodents, and respiration uncoupling activity in recombinant yeast.</title>
        <authorList>
            <person name="Sanchis D."/>
            <person name="Fleury C."/>
            <person name="Chomiki N."/>
            <person name="Goubern M."/>
            <person name="Huang Q."/>
            <person name="Neverova M."/>
            <person name="Gregoire F."/>
            <person name="Easlick J."/>
            <person name="Raimbault S."/>
            <person name="Levi-Meyrueis C."/>
            <person name="Miroux B."/>
            <person name="Collins S."/>
            <person name="Seldin M."/>
            <person name="Richard D."/>
            <person name="Warden C."/>
            <person name="Bouillaud F."/>
            <person name="Ricquier D."/>
        </authorList>
    </citation>
    <scope>NUCLEOTIDE SEQUENCE [MRNA] (ISOFORM 2)</scope>
    <source>
        <strain>BALB/cJ</strain>
        <tissue>Brain</tissue>
    </source>
</reference>
<reference key="2">
    <citation type="journal article" date="2000" name="FASEB J.">
        <title>Characterization of novel UCP5/BMCP1 isoforms and differential regulation of UCP4 and UCP5 expression through dietary or temperature manipulation.</title>
        <authorList>
            <person name="Yu X.X."/>
            <person name="Mao W."/>
            <person name="Zhong A."/>
            <person name="Schow P."/>
            <person name="Brush J."/>
            <person name="Sherwood S.W."/>
            <person name="Adams S.H."/>
            <person name="Pan G."/>
        </authorList>
    </citation>
    <scope>NUCLEOTIDE SEQUENCE [MRNA]</scope>
    <scope>ALTERNATIVE SPLICING</scope>
    <scope>TISSUE SPECIFICITY</scope>
</reference>
<reference key="3">
    <citation type="journal article" date="2009" name="PLoS Biol.">
        <title>Lineage-specific biology revealed by a finished genome assembly of the mouse.</title>
        <authorList>
            <person name="Church D.M."/>
            <person name="Goodstadt L."/>
            <person name="Hillier L.W."/>
            <person name="Zody M.C."/>
            <person name="Goldstein S."/>
            <person name="She X."/>
            <person name="Bult C.J."/>
            <person name="Agarwala R."/>
            <person name="Cherry J.L."/>
            <person name="DiCuccio M."/>
            <person name="Hlavina W."/>
            <person name="Kapustin Y."/>
            <person name="Meric P."/>
            <person name="Maglott D."/>
            <person name="Birtle Z."/>
            <person name="Marques A.C."/>
            <person name="Graves T."/>
            <person name="Zhou S."/>
            <person name="Teague B."/>
            <person name="Potamousis K."/>
            <person name="Churas C."/>
            <person name="Place M."/>
            <person name="Herschleb J."/>
            <person name="Runnheim R."/>
            <person name="Forrest D."/>
            <person name="Amos-Landgraf J."/>
            <person name="Schwartz D.C."/>
            <person name="Cheng Z."/>
            <person name="Lindblad-Toh K."/>
            <person name="Eichler E.E."/>
            <person name="Ponting C.P."/>
        </authorList>
    </citation>
    <scope>NUCLEOTIDE SEQUENCE [LARGE SCALE GENOMIC DNA]</scope>
    <source>
        <strain>C57BL/6J</strain>
    </source>
</reference>
<reference key="4">
    <citation type="journal article" date="2004" name="Genome Res.">
        <title>The status, quality, and expansion of the NIH full-length cDNA project: the Mammalian Gene Collection (MGC).</title>
        <authorList>
            <consortium name="The MGC Project Team"/>
        </authorList>
    </citation>
    <scope>NUCLEOTIDE SEQUENCE [LARGE SCALE MRNA] (ISOFORM 1)</scope>
    <source>
        <tissue>Embryo</tissue>
    </source>
</reference>
<reference key="5">
    <citation type="journal article" date="2001" name="J. Neurochem.">
        <title>BMCP1: a mitochondrial uncoupling protein in neurons which regulates mitochondrial function and oxidant production.</title>
        <authorList>
            <person name="Kim-Han J.S."/>
            <person name="Reichert S.A."/>
            <person name="Quick K.L."/>
            <person name="Dugan L.L."/>
        </authorList>
    </citation>
    <scope>FUNCTION</scope>
    <scope>SUBCELLULAR LOCATION</scope>
    <scope>TISSUE SPECIFICITY</scope>
</reference>
<reference key="6">
    <citation type="journal article" date="2010" name="Cell">
        <title>A tissue-specific atlas of mouse protein phosphorylation and expression.</title>
        <authorList>
            <person name="Huttlin E.L."/>
            <person name="Jedrychowski M.P."/>
            <person name="Elias J.E."/>
            <person name="Goswami T."/>
            <person name="Rad R."/>
            <person name="Beausoleil S.A."/>
            <person name="Villen J."/>
            <person name="Haas W."/>
            <person name="Sowa M.E."/>
            <person name="Gygi S.P."/>
        </authorList>
    </citation>
    <scope>IDENTIFICATION BY MASS SPECTROMETRY [LARGE SCALE ANALYSIS]</scope>
    <source>
        <tissue>Brain</tissue>
    </source>
</reference>
<feature type="chain" id="PRO_0000090678" description="Brain mitochondrial carrier protein 1">
    <location>
        <begin position="1"/>
        <end position="325"/>
    </location>
</feature>
<feature type="transmembrane region" description="Helical; Name=1" evidence="2">
    <location>
        <begin position="38"/>
        <end position="54"/>
    </location>
</feature>
<feature type="transmembrane region" description="Helical; Name=2" evidence="2">
    <location>
        <begin position="112"/>
        <end position="128"/>
    </location>
</feature>
<feature type="transmembrane region" description="Helical; Name=3" evidence="2">
    <location>
        <begin position="145"/>
        <end position="165"/>
    </location>
</feature>
<feature type="transmembrane region" description="Helical; Name=4" evidence="2">
    <location>
        <begin position="199"/>
        <end position="215"/>
    </location>
</feature>
<feature type="transmembrane region" description="Helical; Name=5" evidence="2">
    <location>
        <begin position="240"/>
        <end position="256"/>
    </location>
</feature>
<feature type="transmembrane region" description="Helical; Name=6" evidence="2">
    <location>
        <begin position="298"/>
        <end position="315"/>
    </location>
</feature>
<feature type="repeat" description="Solcar 1">
    <location>
        <begin position="42"/>
        <end position="131"/>
    </location>
</feature>
<feature type="repeat" description="Solcar 2">
    <location>
        <begin position="139"/>
        <end position="224"/>
    </location>
</feature>
<feature type="repeat" description="Solcar 3">
    <location>
        <begin position="233"/>
        <end position="323"/>
    </location>
</feature>
<feature type="splice variant" id="VSP_003274" description="In isoform 2." evidence="6">
    <location>
        <begin position="23"/>
        <end position="25"/>
    </location>
</feature>
<proteinExistence type="evidence at protein level"/>
<sequence length="325" mass="36286">MGIFPGIILIFLRVKFATAAVIVSGHQKSSTLSHEMSGLNWKPFVYGGLASIVAEFGTFPVDLTKTRLQVQGQSIDVRFKEIKYRGMFHALFRIYKEEGILALYSGIAPALLRQASYGTIKIGIYQSLKRLFVERLEDETLLINMICGVVSGVISSTIANPTDVLKIRMQAQGSLFQGSMIGSFIDIYQQEGTRGLWRGVVPTAQRAAIVVGVELPVYDITKKHLIVSGMLGDTILTHFVSSFTCGLAGALASNPVDVVRTRMMNQRAIVGHVDLYKGTLDGILKMWKHEGFFALYKGFWPNWLRLGPWNIIFFITYEQLKRLQI</sequence>
<keyword id="KW-0025">Alternative splicing</keyword>
<keyword id="KW-0472">Membrane</keyword>
<keyword id="KW-0496">Mitochondrion</keyword>
<keyword id="KW-0999">Mitochondrion inner membrane</keyword>
<keyword id="KW-1185">Reference proteome</keyword>
<keyword id="KW-0677">Repeat</keyword>
<keyword id="KW-0812">Transmembrane</keyword>
<keyword id="KW-1133">Transmembrane helix</keyword>
<keyword id="KW-0813">Transport</keyword>